<sequence length="182" mass="20307">MSYIPELKRRYRDNIVKELVSEFQYKSIMQAPKIEKIVVSMGVGDAVKNKKLLDSAVMELSQITGQKAVKTKAKKAISGFKIRQGQEIGAKVTLRGNMMYEFLYKLVNLALPRVKDFRGINGNAFDGNGNCSFGIAEQIIFSEIDYDKIERISGLNVTIVTTALNDKEGKALLAKFGMPFSN</sequence>
<gene>
    <name evidence="1" type="primary">rplE</name>
    <name type="ordered locus">BDU_493</name>
</gene>
<name>RL5_BORDL</name>
<proteinExistence type="inferred from homology"/>
<comment type="function">
    <text evidence="1">This is one of the proteins that bind and probably mediate the attachment of the 5S RNA into the large ribosomal subunit, where it forms part of the central protuberance. In the 70S ribosome it contacts protein S13 of the 30S subunit (bridge B1b), connecting the 2 subunits; this bridge is implicated in subunit movement. Contacts the P site tRNA; the 5S rRNA and some of its associated proteins might help stabilize positioning of ribosome-bound tRNAs.</text>
</comment>
<comment type="subunit">
    <text evidence="1">Part of the 50S ribosomal subunit; part of the 5S rRNA/L5/L18/L25 subcomplex. Contacts the 5S rRNA and the P site tRNA. Forms a bridge to the 30S subunit in the 70S ribosome.</text>
</comment>
<comment type="similarity">
    <text evidence="1">Belongs to the universal ribosomal protein uL5 family.</text>
</comment>
<reference key="1">
    <citation type="journal article" date="2008" name="PLoS Genet.">
        <title>The genome of Borrelia recurrentis, the agent of deadly louse-borne relapsing fever, is a degraded subset of tick-borne Borrelia duttonii.</title>
        <authorList>
            <person name="Lescot M."/>
            <person name="Audic S."/>
            <person name="Robert C."/>
            <person name="Nguyen T.T."/>
            <person name="Blanc G."/>
            <person name="Cutler S.J."/>
            <person name="Wincker P."/>
            <person name="Couloux A."/>
            <person name="Claverie J.-M."/>
            <person name="Raoult D."/>
            <person name="Drancourt M."/>
        </authorList>
    </citation>
    <scope>NUCLEOTIDE SEQUENCE [LARGE SCALE GENOMIC DNA]</scope>
    <source>
        <strain>Ly</strain>
    </source>
</reference>
<evidence type="ECO:0000255" key="1">
    <source>
        <dbReference type="HAMAP-Rule" id="MF_01333"/>
    </source>
</evidence>
<evidence type="ECO:0000305" key="2"/>
<protein>
    <recommendedName>
        <fullName evidence="1">Large ribosomal subunit protein uL5</fullName>
    </recommendedName>
    <alternativeName>
        <fullName evidence="2">50S ribosomal protein L5</fullName>
    </alternativeName>
</protein>
<organism>
    <name type="scientific">Borrelia duttonii (strain Ly)</name>
    <dbReference type="NCBI Taxonomy" id="412419"/>
    <lineage>
        <taxon>Bacteria</taxon>
        <taxon>Pseudomonadati</taxon>
        <taxon>Spirochaetota</taxon>
        <taxon>Spirochaetia</taxon>
        <taxon>Spirochaetales</taxon>
        <taxon>Borreliaceae</taxon>
        <taxon>Borrelia</taxon>
    </lineage>
</organism>
<dbReference type="EMBL" id="CP000976">
    <property type="protein sequence ID" value="ACH93434.1"/>
    <property type="molecule type" value="Genomic_DNA"/>
</dbReference>
<dbReference type="RefSeq" id="WP_012538244.1">
    <property type="nucleotide sequence ID" value="NC_011229.1"/>
</dbReference>
<dbReference type="SMR" id="B5RM48"/>
<dbReference type="STRING" id="412419.BDU_493"/>
<dbReference type="KEGG" id="bdu:BDU_493"/>
<dbReference type="eggNOG" id="COG0094">
    <property type="taxonomic scope" value="Bacteria"/>
</dbReference>
<dbReference type="HOGENOM" id="CLU_061015_2_1_12"/>
<dbReference type="OrthoDB" id="9806626at2"/>
<dbReference type="Proteomes" id="UP000000611">
    <property type="component" value="Chromosome"/>
</dbReference>
<dbReference type="GO" id="GO:1990904">
    <property type="term" value="C:ribonucleoprotein complex"/>
    <property type="evidence" value="ECO:0007669"/>
    <property type="project" value="UniProtKB-KW"/>
</dbReference>
<dbReference type="GO" id="GO:0005840">
    <property type="term" value="C:ribosome"/>
    <property type="evidence" value="ECO:0007669"/>
    <property type="project" value="UniProtKB-KW"/>
</dbReference>
<dbReference type="GO" id="GO:0019843">
    <property type="term" value="F:rRNA binding"/>
    <property type="evidence" value="ECO:0007669"/>
    <property type="project" value="UniProtKB-UniRule"/>
</dbReference>
<dbReference type="GO" id="GO:0003735">
    <property type="term" value="F:structural constituent of ribosome"/>
    <property type="evidence" value="ECO:0007669"/>
    <property type="project" value="InterPro"/>
</dbReference>
<dbReference type="GO" id="GO:0000049">
    <property type="term" value="F:tRNA binding"/>
    <property type="evidence" value="ECO:0007669"/>
    <property type="project" value="UniProtKB-UniRule"/>
</dbReference>
<dbReference type="GO" id="GO:0006412">
    <property type="term" value="P:translation"/>
    <property type="evidence" value="ECO:0007669"/>
    <property type="project" value="UniProtKB-UniRule"/>
</dbReference>
<dbReference type="FunFam" id="3.30.1440.10:FF:000001">
    <property type="entry name" value="50S ribosomal protein L5"/>
    <property type="match status" value="1"/>
</dbReference>
<dbReference type="Gene3D" id="3.30.1440.10">
    <property type="match status" value="1"/>
</dbReference>
<dbReference type="HAMAP" id="MF_01333_B">
    <property type="entry name" value="Ribosomal_uL5_B"/>
    <property type="match status" value="1"/>
</dbReference>
<dbReference type="InterPro" id="IPR002132">
    <property type="entry name" value="Ribosomal_uL5"/>
</dbReference>
<dbReference type="InterPro" id="IPR020930">
    <property type="entry name" value="Ribosomal_uL5_bac-type"/>
</dbReference>
<dbReference type="InterPro" id="IPR031309">
    <property type="entry name" value="Ribosomal_uL5_C"/>
</dbReference>
<dbReference type="InterPro" id="IPR020929">
    <property type="entry name" value="Ribosomal_uL5_CS"/>
</dbReference>
<dbReference type="InterPro" id="IPR022803">
    <property type="entry name" value="Ribosomal_uL5_dom_sf"/>
</dbReference>
<dbReference type="InterPro" id="IPR031310">
    <property type="entry name" value="Ribosomal_uL5_N"/>
</dbReference>
<dbReference type="NCBIfam" id="NF000585">
    <property type="entry name" value="PRK00010.1"/>
    <property type="match status" value="1"/>
</dbReference>
<dbReference type="PANTHER" id="PTHR11994">
    <property type="entry name" value="60S RIBOSOMAL PROTEIN L11-RELATED"/>
    <property type="match status" value="1"/>
</dbReference>
<dbReference type="Pfam" id="PF00281">
    <property type="entry name" value="Ribosomal_L5"/>
    <property type="match status" value="1"/>
</dbReference>
<dbReference type="Pfam" id="PF00673">
    <property type="entry name" value="Ribosomal_L5_C"/>
    <property type="match status" value="1"/>
</dbReference>
<dbReference type="PIRSF" id="PIRSF002161">
    <property type="entry name" value="Ribosomal_L5"/>
    <property type="match status" value="1"/>
</dbReference>
<dbReference type="SUPFAM" id="SSF55282">
    <property type="entry name" value="RL5-like"/>
    <property type="match status" value="1"/>
</dbReference>
<dbReference type="PROSITE" id="PS00358">
    <property type="entry name" value="RIBOSOMAL_L5"/>
    <property type="match status" value="1"/>
</dbReference>
<keyword id="KW-0687">Ribonucleoprotein</keyword>
<keyword id="KW-0689">Ribosomal protein</keyword>
<keyword id="KW-0694">RNA-binding</keyword>
<keyword id="KW-0699">rRNA-binding</keyword>
<keyword id="KW-0820">tRNA-binding</keyword>
<accession>B5RM48</accession>
<feature type="chain" id="PRO_1000142358" description="Large ribosomal subunit protein uL5">
    <location>
        <begin position="1"/>
        <end position="182"/>
    </location>
</feature>